<evidence type="ECO:0000250" key="1"/>
<evidence type="ECO:0000255" key="2">
    <source>
        <dbReference type="HAMAP-Rule" id="MF_00403"/>
    </source>
</evidence>
<evidence type="ECO:0000256" key="3">
    <source>
        <dbReference type="SAM" id="MobiDB-lite"/>
    </source>
</evidence>
<evidence type="ECO:0000305" key="4"/>
<organism>
    <name type="scientific">Hyphomonas neptunium (strain ATCC 15444)</name>
    <dbReference type="NCBI Taxonomy" id="228405"/>
    <lineage>
        <taxon>Bacteria</taxon>
        <taxon>Pseudomonadati</taxon>
        <taxon>Pseudomonadota</taxon>
        <taxon>Alphaproteobacteria</taxon>
        <taxon>Hyphomonadales</taxon>
        <taxon>Hyphomonadaceae</taxon>
        <taxon>Hyphomonas</taxon>
    </lineage>
</organism>
<accession>Q0BYA9</accession>
<gene>
    <name evidence="2" type="primary">rpsL</name>
    <name type="ordered locus">HNE_2856</name>
</gene>
<reference key="1">
    <citation type="journal article" date="2006" name="J. Bacteriol.">
        <title>Comparative genomic evidence for a close relationship between the dimorphic prosthecate bacteria Hyphomonas neptunium and Caulobacter crescentus.</title>
        <authorList>
            <person name="Badger J.H."/>
            <person name="Hoover T.R."/>
            <person name="Brun Y.V."/>
            <person name="Weiner R.M."/>
            <person name="Laub M.T."/>
            <person name="Alexandre G."/>
            <person name="Mrazek J."/>
            <person name="Ren Q."/>
            <person name="Paulsen I.T."/>
            <person name="Nelson K.E."/>
            <person name="Khouri H.M."/>
            <person name="Radune D."/>
            <person name="Sosa J."/>
            <person name="Dodson R.J."/>
            <person name="Sullivan S.A."/>
            <person name="Rosovitz M.J."/>
            <person name="Madupu R."/>
            <person name="Brinkac L.M."/>
            <person name="Durkin A.S."/>
            <person name="Daugherty S.C."/>
            <person name="Kothari S.P."/>
            <person name="Giglio M.G."/>
            <person name="Zhou L."/>
            <person name="Haft D.H."/>
            <person name="Selengut J.D."/>
            <person name="Davidsen T.M."/>
            <person name="Yang Q."/>
            <person name="Zafar N."/>
            <person name="Ward N.L."/>
        </authorList>
    </citation>
    <scope>NUCLEOTIDE SEQUENCE [LARGE SCALE GENOMIC DNA]</scope>
    <source>
        <strain>ATCC 15444</strain>
    </source>
</reference>
<keyword id="KW-0488">Methylation</keyword>
<keyword id="KW-1185">Reference proteome</keyword>
<keyword id="KW-0687">Ribonucleoprotein</keyword>
<keyword id="KW-0689">Ribosomal protein</keyword>
<keyword id="KW-0694">RNA-binding</keyword>
<keyword id="KW-0699">rRNA-binding</keyword>
<keyword id="KW-0820">tRNA-binding</keyword>
<proteinExistence type="inferred from homology"/>
<comment type="function">
    <text evidence="2">With S4 and S5 plays an important role in translational accuracy.</text>
</comment>
<comment type="function">
    <text evidence="2">Interacts with and stabilizes bases of the 16S rRNA that are involved in tRNA selection in the A site and with the mRNA backbone. Located at the interface of the 30S and 50S subunits, it traverses the body of the 30S subunit contacting proteins on the other side and probably holding the rRNA structure together. The combined cluster of proteins S8, S12 and S17 appears to hold together the shoulder and platform of the 30S subunit.</text>
</comment>
<comment type="subunit">
    <text evidence="2">Part of the 30S ribosomal subunit. Contacts proteins S8 and S17. May interact with IF1 in the 30S initiation complex.</text>
</comment>
<comment type="similarity">
    <text evidence="2">Belongs to the universal ribosomal protein uS12 family.</text>
</comment>
<sequence length="123" mass="13992">MPTIQQLIRNPREPKRTRTKTPALKACPQRRGVCTRVYTTTPKKPNSALRKVAKVRMTSGFESLCYIPGEGHNLQEHSVVLIRGGRVKDLPGVRYHIVRGALDTQPVKNRKQRRSHYGAKKPK</sequence>
<dbReference type="EMBL" id="CP000158">
    <property type="protein sequence ID" value="ABI78460.1"/>
    <property type="molecule type" value="Genomic_DNA"/>
</dbReference>
<dbReference type="RefSeq" id="WP_011647831.1">
    <property type="nucleotide sequence ID" value="NC_008358.1"/>
</dbReference>
<dbReference type="SMR" id="Q0BYA9"/>
<dbReference type="STRING" id="228405.HNE_2856"/>
<dbReference type="KEGG" id="hne:HNE_2856"/>
<dbReference type="eggNOG" id="COG0048">
    <property type="taxonomic scope" value="Bacteria"/>
</dbReference>
<dbReference type="HOGENOM" id="CLU_104295_1_2_5"/>
<dbReference type="Proteomes" id="UP000001959">
    <property type="component" value="Chromosome"/>
</dbReference>
<dbReference type="GO" id="GO:0015935">
    <property type="term" value="C:small ribosomal subunit"/>
    <property type="evidence" value="ECO:0007669"/>
    <property type="project" value="InterPro"/>
</dbReference>
<dbReference type="GO" id="GO:0019843">
    <property type="term" value="F:rRNA binding"/>
    <property type="evidence" value="ECO:0007669"/>
    <property type="project" value="UniProtKB-UniRule"/>
</dbReference>
<dbReference type="GO" id="GO:0003735">
    <property type="term" value="F:structural constituent of ribosome"/>
    <property type="evidence" value="ECO:0007669"/>
    <property type="project" value="InterPro"/>
</dbReference>
<dbReference type="GO" id="GO:0000049">
    <property type="term" value="F:tRNA binding"/>
    <property type="evidence" value="ECO:0007669"/>
    <property type="project" value="UniProtKB-UniRule"/>
</dbReference>
<dbReference type="GO" id="GO:0006412">
    <property type="term" value="P:translation"/>
    <property type="evidence" value="ECO:0007669"/>
    <property type="project" value="UniProtKB-UniRule"/>
</dbReference>
<dbReference type="CDD" id="cd03368">
    <property type="entry name" value="Ribosomal_S12"/>
    <property type="match status" value="1"/>
</dbReference>
<dbReference type="FunFam" id="2.40.50.140:FF:000001">
    <property type="entry name" value="30S ribosomal protein S12"/>
    <property type="match status" value="1"/>
</dbReference>
<dbReference type="Gene3D" id="2.40.50.140">
    <property type="entry name" value="Nucleic acid-binding proteins"/>
    <property type="match status" value="1"/>
</dbReference>
<dbReference type="HAMAP" id="MF_00403_B">
    <property type="entry name" value="Ribosomal_uS12_B"/>
    <property type="match status" value="1"/>
</dbReference>
<dbReference type="InterPro" id="IPR012340">
    <property type="entry name" value="NA-bd_OB-fold"/>
</dbReference>
<dbReference type="InterPro" id="IPR006032">
    <property type="entry name" value="Ribosomal_uS12"/>
</dbReference>
<dbReference type="InterPro" id="IPR005679">
    <property type="entry name" value="Ribosomal_uS12_bac"/>
</dbReference>
<dbReference type="NCBIfam" id="TIGR00981">
    <property type="entry name" value="rpsL_bact"/>
    <property type="match status" value="1"/>
</dbReference>
<dbReference type="PANTHER" id="PTHR11652">
    <property type="entry name" value="30S RIBOSOMAL PROTEIN S12 FAMILY MEMBER"/>
    <property type="match status" value="1"/>
</dbReference>
<dbReference type="Pfam" id="PF00164">
    <property type="entry name" value="Ribosom_S12_S23"/>
    <property type="match status" value="1"/>
</dbReference>
<dbReference type="PIRSF" id="PIRSF002133">
    <property type="entry name" value="Ribosomal_S12/S23"/>
    <property type="match status" value="1"/>
</dbReference>
<dbReference type="PRINTS" id="PR01034">
    <property type="entry name" value="RIBOSOMALS12"/>
</dbReference>
<dbReference type="SUPFAM" id="SSF50249">
    <property type="entry name" value="Nucleic acid-binding proteins"/>
    <property type="match status" value="1"/>
</dbReference>
<dbReference type="PROSITE" id="PS00055">
    <property type="entry name" value="RIBOSOMAL_S12"/>
    <property type="match status" value="1"/>
</dbReference>
<name>RS12_HYPNA</name>
<feature type="chain" id="PRO_0000263563" description="Small ribosomal subunit protein uS12">
    <location>
        <begin position="1"/>
        <end position="123"/>
    </location>
</feature>
<feature type="region of interest" description="Disordered" evidence="3">
    <location>
        <begin position="1"/>
        <end position="28"/>
    </location>
</feature>
<feature type="region of interest" description="Disordered" evidence="3">
    <location>
        <begin position="104"/>
        <end position="123"/>
    </location>
</feature>
<feature type="compositionally biased region" description="Basic residues" evidence="3">
    <location>
        <begin position="108"/>
        <end position="123"/>
    </location>
</feature>
<feature type="modified residue" description="3-methylthioaspartic acid" evidence="1">
    <location>
        <position position="89"/>
    </location>
</feature>
<protein>
    <recommendedName>
        <fullName evidence="2">Small ribosomal subunit protein uS12</fullName>
    </recommendedName>
    <alternativeName>
        <fullName evidence="4">30S ribosomal protein S12</fullName>
    </alternativeName>
</protein>